<dbReference type="EMBL" id="CP017624">
    <property type="protein sequence ID" value="AOW27913.1"/>
    <property type="molecule type" value="Genomic_DNA"/>
</dbReference>
<dbReference type="RefSeq" id="XP_714262.1">
    <property type="nucleotide sequence ID" value="XM_709169.1"/>
</dbReference>
<dbReference type="SMR" id="Q59X40"/>
<dbReference type="BioGRID" id="1227197">
    <property type="interactions" value="3"/>
</dbReference>
<dbReference type="FunCoup" id="Q59X40">
    <property type="interactions" value="139"/>
</dbReference>
<dbReference type="STRING" id="237561.Q59X40"/>
<dbReference type="EnsemblFungi" id="C2_09300W_A-T">
    <property type="protein sequence ID" value="C2_09300W_A-T-p1"/>
    <property type="gene ID" value="C2_09300W_A"/>
</dbReference>
<dbReference type="GeneID" id="3644103"/>
<dbReference type="KEGG" id="cal:CAALFM_C209300WA"/>
<dbReference type="CGD" id="CAL0000197175">
    <property type="gene designation" value="MED18"/>
</dbReference>
<dbReference type="VEuPathDB" id="FungiDB:C2_09300W_A"/>
<dbReference type="eggNOG" id="ENOG502S41C">
    <property type="taxonomic scope" value="Eukaryota"/>
</dbReference>
<dbReference type="HOGENOM" id="CLU_058255_0_0_1"/>
<dbReference type="InParanoid" id="Q59X40"/>
<dbReference type="OMA" id="PGKVNQI"/>
<dbReference type="OrthoDB" id="5348092at2759"/>
<dbReference type="PRO" id="PR:Q59X40"/>
<dbReference type="Proteomes" id="UP000000559">
    <property type="component" value="Chromosome 2"/>
</dbReference>
<dbReference type="GO" id="GO:0070847">
    <property type="term" value="C:core mediator complex"/>
    <property type="evidence" value="ECO:0000318"/>
    <property type="project" value="GO_Central"/>
</dbReference>
<dbReference type="GO" id="GO:0016592">
    <property type="term" value="C:mediator complex"/>
    <property type="evidence" value="ECO:0000318"/>
    <property type="project" value="GO_Central"/>
</dbReference>
<dbReference type="GO" id="GO:0003712">
    <property type="term" value="F:transcription coregulator activity"/>
    <property type="evidence" value="ECO:0000318"/>
    <property type="project" value="GO_Central"/>
</dbReference>
<dbReference type="GO" id="GO:0060261">
    <property type="term" value="P:positive regulation of transcription initiation by RNA polymerase II"/>
    <property type="evidence" value="ECO:0000318"/>
    <property type="project" value="GO_Central"/>
</dbReference>
<dbReference type="Gene3D" id="2.40.320.10">
    <property type="entry name" value="Hypothetical Protein Pfu-838710-001"/>
    <property type="match status" value="1"/>
</dbReference>
<dbReference type="InterPro" id="IPR019095">
    <property type="entry name" value="Mediator_Med18"/>
</dbReference>
<dbReference type="PANTHER" id="PTHR13321:SF2">
    <property type="entry name" value="MEDIATOR OF RNA POLYMERASE II TRANSCRIPTION SUBUNIT 18"/>
    <property type="match status" value="1"/>
</dbReference>
<dbReference type="PANTHER" id="PTHR13321">
    <property type="entry name" value="MEDIATOR OF RNA POLYMERASE II TRANSCRIPTION, SUBUNIT 18"/>
    <property type="match status" value="1"/>
</dbReference>
<dbReference type="Pfam" id="PF09637">
    <property type="entry name" value="Med18"/>
    <property type="match status" value="1"/>
</dbReference>
<comment type="function">
    <text evidence="1">Component of the Mediator complex, a coactivator involved in the regulated transcription of nearly all RNA polymerase II-dependent genes. Mediator functions as a bridge to convey information from gene-specific regulatory proteins to the basal RNA polymerase II transcription machinery. Mediator is recruited to promoters by direct interactions with regulatory proteins and serves as a scaffold for the assembly of a functional preinitiation complex with RNA polymerase II and the general transcription factors (By similarity).</text>
</comment>
<comment type="subunit">
    <text evidence="1">Component of the Mediator complex.</text>
</comment>
<comment type="subcellular location">
    <subcellularLocation>
        <location evidence="1">Nucleus</location>
    </subcellularLocation>
</comment>
<comment type="similarity">
    <text evidence="3">Belongs to the Mediator complex subunit 18 family.</text>
</comment>
<proteinExistence type="inferred from homology"/>
<reference key="1">
    <citation type="journal article" date="2004" name="Proc. Natl. Acad. Sci. U.S.A.">
        <title>The diploid genome sequence of Candida albicans.</title>
        <authorList>
            <person name="Jones T."/>
            <person name="Federspiel N.A."/>
            <person name="Chibana H."/>
            <person name="Dungan J."/>
            <person name="Kalman S."/>
            <person name="Magee B.B."/>
            <person name="Newport G."/>
            <person name="Thorstenson Y.R."/>
            <person name="Agabian N."/>
            <person name="Magee P.T."/>
            <person name="Davis R.W."/>
            <person name="Scherer S."/>
        </authorList>
    </citation>
    <scope>NUCLEOTIDE SEQUENCE [LARGE SCALE GENOMIC DNA]</scope>
    <source>
        <strain>SC5314 / ATCC MYA-2876</strain>
    </source>
</reference>
<reference key="2">
    <citation type="journal article" date="2007" name="Genome Biol.">
        <title>Assembly of the Candida albicans genome into sixteen supercontigs aligned on the eight chromosomes.</title>
        <authorList>
            <person name="van het Hoog M."/>
            <person name="Rast T.J."/>
            <person name="Martchenko M."/>
            <person name="Grindle S."/>
            <person name="Dignard D."/>
            <person name="Hogues H."/>
            <person name="Cuomo C."/>
            <person name="Berriman M."/>
            <person name="Scherer S."/>
            <person name="Magee B.B."/>
            <person name="Whiteway M."/>
            <person name="Chibana H."/>
            <person name="Nantel A."/>
            <person name="Magee P.T."/>
        </authorList>
    </citation>
    <scope>GENOME REANNOTATION</scope>
    <source>
        <strain>SC5314 / ATCC MYA-2876</strain>
    </source>
</reference>
<reference key="3">
    <citation type="journal article" date="2013" name="Genome Biol.">
        <title>Assembly of a phased diploid Candida albicans genome facilitates allele-specific measurements and provides a simple model for repeat and indel structure.</title>
        <authorList>
            <person name="Muzzey D."/>
            <person name="Schwartz K."/>
            <person name="Weissman J.S."/>
            <person name="Sherlock G."/>
        </authorList>
    </citation>
    <scope>NUCLEOTIDE SEQUENCE [LARGE SCALE GENOMIC DNA]</scope>
    <scope>GENOME REANNOTATION</scope>
    <source>
        <strain>SC5314 / ATCC MYA-2876</strain>
    </source>
</reference>
<evidence type="ECO:0000250" key="1"/>
<evidence type="ECO:0000256" key="2">
    <source>
        <dbReference type="SAM" id="MobiDB-lite"/>
    </source>
</evidence>
<evidence type="ECO:0000305" key="3"/>
<name>MED18_CANAL</name>
<gene>
    <name type="primary">SRB5</name>
    <name type="synonym">MED18</name>
    <name type="ordered locus">CAALFM_C209300WA</name>
    <name type="ORF">CaO19.11572</name>
    <name type="ORF">CaO19.4091</name>
</gene>
<keyword id="KW-0010">Activator</keyword>
<keyword id="KW-0539">Nucleus</keyword>
<keyword id="KW-1185">Reference proteome</keyword>
<keyword id="KW-0804">Transcription</keyword>
<keyword id="KW-0805">Transcription regulation</keyword>
<organism>
    <name type="scientific">Candida albicans (strain SC5314 / ATCC MYA-2876)</name>
    <name type="common">Yeast</name>
    <dbReference type="NCBI Taxonomy" id="237561"/>
    <lineage>
        <taxon>Eukaryota</taxon>
        <taxon>Fungi</taxon>
        <taxon>Dikarya</taxon>
        <taxon>Ascomycota</taxon>
        <taxon>Saccharomycotina</taxon>
        <taxon>Pichiomycetes</taxon>
        <taxon>Debaryomycetaceae</taxon>
        <taxon>Candida/Lodderomyces clade</taxon>
        <taxon>Candida</taxon>
    </lineage>
</organism>
<protein>
    <recommendedName>
        <fullName>Mediator of RNA polymerase II transcription subunit 18</fullName>
    </recommendedName>
    <alternativeName>
        <fullName>Mediator complex subunit 18</fullName>
    </alternativeName>
</protein>
<feature type="chain" id="PRO_0000304757" description="Mediator of RNA polymerase II transcription subunit 18">
    <location>
        <begin position="1"/>
        <end position="351"/>
    </location>
</feature>
<feature type="region of interest" description="Disordered" evidence="2">
    <location>
        <begin position="153"/>
        <end position="231"/>
    </location>
</feature>
<feature type="compositionally biased region" description="Basic and acidic residues" evidence="2">
    <location>
        <begin position="163"/>
        <end position="204"/>
    </location>
</feature>
<feature type="compositionally biased region" description="Acidic residues" evidence="2">
    <location>
        <begin position="205"/>
        <end position="216"/>
    </location>
</feature>
<feature type="compositionally biased region" description="Polar residues" evidence="2">
    <location>
        <begin position="217"/>
        <end position="231"/>
    </location>
</feature>
<accession>Q59X40</accession>
<accession>A0A1D8PIB3</accession>
<sequence>MVHQLSLVSSIPHNKYLQTISTLQALTGLIQPESISTYTLLAKPSYAFKPKFEPGKVNQIEQYYMRCITTWNSDKQGDDEKVEKGFDISEPFINKESNIVVRKLFTEEDSVERVWTLQVSDIPVAGKNQGCCQQQIYESTLVHTHTAIEIKVGNGDPIDIDTNNDKQGDNNTDKPKQEHDGKLPEAIDEDIIKNGDEKKTTHDDNDSDIMEIDEPNPETQTLPQSLSNGVSQRTTRKDSFLIFLSDLGYEVINQYWQKGVRFFYGDIIIEIYKIFIRDESSQADSNEGIKLKLLDDSNQFQIKAYININKSTEIDSINSGVKELIKLQEFLKNLFVLEIPDRMFMDSRIKQ</sequence>